<evidence type="ECO:0000255" key="1">
    <source>
        <dbReference type="HAMAP-Rule" id="MF_00791"/>
    </source>
</evidence>
<feature type="chain" id="PRO_1000083667" description="Protein ApaG">
    <location>
        <begin position="1"/>
        <end position="126"/>
    </location>
</feature>
<feature type="domain" description="ApaG" evidence="1">
    <location>
        <begin position="2"/>
        <end position="126"/>
    </location>
</feature>
<name>APAG_VIBC1</name>
<reference key="1">
    <citation type="submission" date="2007-08" db="EMBL/GenBank/DDBJ databases">
        <authorList>
            <consortium name="The Vibrio harveyi Genome Sequencing Project"/>
            <person name="Bassler B."/>
            <person name="Clifton S.W."/>
            <person name="Fulton L."/>
            <person name="Delehaunty K."/>
            <person name="Fronick C."/>
            <person name="Harrison M."/>
            <person name="Markivic C."/>
            <person name="Fulton R."/>
            <person name="Tin-Wollam A.-M."/>
            <person name="Shah N."/>
            <person name="Pepin K."/>
            <person name="Nash W."/>
            <person name="Thiruvilangam P."/>
            <person name="Bhonagiri V."/>
            <person name="Waters C."/>
            <person name="Tu K.C."/>
            <person name="Irgon J."/>
            <person name="Wilson R.K."/>
        </authorList>
    </citation>
    <scope>NUCLEOTIDE SEQUENCE [LARGE SCALE GENOMIC DNA]</scope>
    <source>
        <strain>ATCC BAA-1116 / BB120</strain>
    </source>
</reference>
<organism>
    <name type="scientific">Vibrio campbellii (strain ATCC BAA-1116)</name>
    <dbReference type="NCBI Taxonomy" id="2902295"/>
    <lineage>
        <taxon>Bacteria</taxon>
        <taxon>Pseudomonadati</taxon>
        <taxon>Pseudomonadota</taxon>
        <taxon>Gammaproteobacteria</taxon>
        <taxon>Vibrionales</taxon>
        <taxon>Vibrionaceae</taxon>
        <taxon>Vibrio</taxon>
    </lineage>
</organism>
<sequence>MDVIQPCIKIQVHTKYIEEQSNPELQRYVFAYVITIKNLSQQTVQLISRRWLITDSNGKQMTVEGEGVVGQQPFISGSDEYTYSSGTALETPVGVMQGHYILLDEKGNEFITEIDPFRLAIPNVLN</sequence>
<accession>A7MWC5</accession>
<dbReference type="EMBL" id="CP000789">
    <property type="protein sequence ID" value="ABU69808.1"/>
    <property type="molecule type" value="Genomic_DNA"/>
</dbReference>
<dbReference type="RefSeq" id="WP_005430416.1">
    <property type="nucleotide sequence ID" value="NC_022269.1"/>
</dbReference>
<dbReference type="SMR" id="A7MWC5"/>
<dbReference type="GeneID" id="67378553"/>
<dbReference type="KEGG" id="vha:VIBHAR_00807"/>
<dbReference type="PATRIC" id="fig|338187.25.peg.1808"/>
<dbReference type="Proteomes" id="UP000008152">
    <property type="component" value="Chromosome I"/>
</dbReference>
<dbReference type="GO" id="GO:0070987">
    <property type="term" value="P:error-free translesion synthesis"/>
    <property type="evidence" value="ECO:0007669"/>
    <property type="project" value="TreeGrafter"/>
</dbReference>
<dbReference type="Gene3D" id="2.60.40.1470">
    <property type="entry name" value="ApaG domain"/>
    <property type="match status" value="1"/>
</dbReference>
<dbReference type="HAMAP" id="MF_00791">
    <property type="entry name" value="ApaG"/>
    <property type="match status" value="1"/>
</dbReference>
<dbReference type="InterPro" id="IPR007474">
    <property type="entry name" value="ApaG_domain"/>
</dbReference>
<dbReference type="InterPro" id="IPR036767">
    <property type="entry name" value="ApaG_sf"/>
</dbReference>
<dbReference type="InterPro" id="IPR023065">
    <property type="entry name" value="Uncharacterised_ApaG"/>
</dbReference>
<dbReference type="NCBIfam" id="NF003967">
    <property type="entry name" value="PRK05461.1"/>
    <property type="match status" value="1"/>
</dbReference>
<dbReference type="PANTHER" id="PTHR14289">
    <property type="entry name" value="F-BOX ONLY PROTEIN 3"/>
    <property type="match status" value="1"/>
</dbReference>
<dbReference type="PANTHER" id="PTHR14289:SF16">
    <property type="entry name" value="POLYMERASE DELTA-INTERACTING PROTEIN 2"/>
    <property type="match status" value="1"/>
</dbReference>
<dbReference type="Pfam" id="PF04379">
    <property type="entry name" value="DUF525"/>
    <property type="match status" value="1"/>
</dbReference>
<dbReference type="SUPFAM" id="SSF110069">
    <property type="entry name" value="ApaG-like"/>
    <property type="match status" value="1"/>
</dbReference>
<dbReference type="PROSITE" id="PS51087">
    <property type="entry name" value="APAG"/>
    <property type="match status" value="1"/>
</dbReference>
<proteinExistence type="inferred from homology"/>
<protein>
    <recommendedName>
        <fullName evidence="1">Protein ApaG</fullName>
    </recommendedName>
</protein>
<gene>
    <name evidence="1" type="primary">apaG</name>
    <name type="ordered locus">VIBHAR_00807</name>
</gene>